<gene>
    <name evidence="1" type="primary">hisS</name>
    <name type="ordered locus">PXO_00827</name>
</gene>
<comment type="catalytic activity">
    <reaction evidence="1">
        <text>tRNA(His) + L-histidine + ATP = L-histidyl-tRNA(His) + AMP + diphosphate + H(+)</text>
        <dbReference type="Rhea" id="RHEA:17313"/>
        <dbReference type="Rhea" id="RHEA-COMP:9665"/>
        <dbReference type="Rhea" id="RHEA-COMP:9689"/>
        <dbReference type="ChEBI" id="CHEBI:15378"/>
        <dbReference type="ChEBI" id="CHEBI:30616"/>
        <dbReference type="ChEBI" id="CHEBI:33019"/>
        <dbReference type="ChEBI" id="CHEBI:57595"/>
        <dbReference type="ChEBI" id="CHEBI:78442"/>
        <dbReference type="ChEBI" id="CHEBI:78527"/>
        <dbReference type="ChEBI" id="CHEBI:456215"/>
        <dbReference type="EC" id="6.1.1.21"/>
    </reaction>
</comment>
<comment type="subunit">
    <text evidence="1">Homodimer.</text>
</comment>
<comment type="subcellular location">
    <subcellularLocation>
        <location evidence="1">Cytoplasm</location>
    </subcellularLocation>
</comment>
<comment type="similarity">
    <text evidence="1">Belongs to the class-II aminoacyl-tRNA synthetase family.</text>
</comment>
<feature type="chain" id="PRO_1000095612" description="Histidine--tRNA ligase">
    <location>
        <begin position="1"/>
        <end position="470"/>
    </location>
</feature>
<protein>
    <recommendedName>
        <fullName evidence="1">Histidine--tRNA ligase</fullName>
        <ecNumber evidence="1">6.1.1.21</ecNumber>
    </recommendedName>
    <alternativeName>
        <fullName evidence="1">Histidyl-tRNA synthetase</fullName>
        <shortName evidence="1">HisRS</shortName>
    </alternativeName>
</protein>
<sequence length="470" mass="52014">MIKPRTPPGIMELLPREQIAFQRMLDVIRRNYERFGFLPIETPVFELSDVLLTKSGGETERQVYFVQSTGALANAAAAADEGAENGGLPELALRFDLTVPLARYVAEHEHDLSFPFRRYQMQRVYRGERAQRGRFREFYQCDIDVIGKDALSIRYDAEVLAVIHAVFAELGIGDFKVQLNNRKLLRGFFESLGVAEGELQLAVLREVDKIDKRGADYVRDTLVGEGFGIAAEQVARILAFVAVRSEGHADALAQLQALEASVGASATLGEGIAELREVLELVKALGVPERAYCLNFSIARGLDYYTGTVYETTLTDHPQIGSICSGGRYESLASHYTKSRLPGVGISIGLTRLFWQLREAGLIQGIAESSVQAMVALMDETRLDDVLDIARRLRIAGINTEVQMEPKKVGKQFQYAARAGIRFVVLAGDDELARGVVAVKDLVREQQFDVARDELASTLLVELEQAKAMP</sequence>
<name>SYH_XANOP</name>
<accession>B2SKP3</accession>
<evidence type="ECO:0000255" key="1">
    <source>
        <dbReference type="HAMAP-Rule" id="MF_00127"/>
    </source>
</evidence>
<keyword id="KW-0030">Aminoacyl-tRNA synthetase</keyword>
<keyword id="KW-0067">ATP-binding</keyword>
<keyword id="KW-0963">Cytoplasm</keyword>
<keyword id="KW-0436">Ligase</keyword>
<keyword id="KW-0547">Nucleotide-binding</keyword>
<keyword id="KW-0648">Protein biosynthesis</keyword>
<organism>
    <name type="scientific">Xanthomonas oryzae pv. oryzae (strain PXO99A)</name>
    <dbReference type="NCBI Taxonomy" id="360094"/>
    <lineage>
        <taxon>Bacteria</taxon>
        <taxon>Pseudomonadati</taxon>
        <taxon>Pseudomonadota</taxon>
        <taxon>Gammaproteobacteria</taxon>
        <taxon>Lysobacterales</taxon>
        <taxon>Lysobacteraceae</taxon>
        <taxon>Xanthomonas</taxon>
    </lineage>
</organism>
<dbReference type="EC" id="6.1.1.21" evidence="1"/>
<dbReference type="EMBL" id="CP000967">
    <property type="protein sequence ID" value="ACD58965.1"/>
    <property type="molecule type" value="Genomic_DNA"/>
</dbReference>
<dbReference type="RefSeq" id="WP_012444952.1">
    <property type="nucleotide sequence ID" value="NC_010717.2"/>
</dbReference>
<dbReference type="SMR" id="B2SKP3"/>
<dbReference type="KEGG" id="xop:PXO_00827"/>
<dbReference type="eggNOG" id="COG0124">
    <property type="taxonomic scope" value="Bacteria"/>
</dbReference>
<dbReference type="HOGENOM" id="CLU_025113_3_0_6"/>
<dbReference type="Proteomes" id="UP000001740">
    <property type="component" value="Chromosome"/>
</dbReference>
<dbReference type="GO" id="GO:0005737">
    <property type="term" value="C:cytoplasm"/>
    <property type="evidence" value="ECO:0007669"/>
    <property type="project" value="UniProtKB-SubCell"/>
</dbReference>
<dbReference type="GO" id="GO:0005524">
    <property type="term" value="F:ATP binding"/>
    <property type="evidence" value="ECO:0007669"/>
    <property type="project" value="UniProtKB-UniRule"/>
</dbReference>
<dbReference type="GO" id="GO:0004821">
    <property type="term" value="F:histidine-tRNA ligase activity"/>
    <property type="evidence" value="ECO:0007669"/>
    <property type="project" value="UniProtKB-UniRule"/>
</dbReference>
<dbReference type="GO" id="GO:0006427">
    <property type="term" value="P:histidyl-tRNA aminoacylation"/>
    <property type="evidence" value="ECO:0007669"/>
    <property type="project" value="UniProtKB-UniRule"/>
</dbReference>
<dbReference type="CDD" id="cd00773">
    <property type="entry name" value="HisRS-like_core"/>
    <property type="match status" value="1"/>
</dbReference>
<dbReference type="CDD" id="cd00859">
    <property type="entry name" value="HisRS_anticodon"/>
    <property type="match status" value="1"/>
</dbReference>
<dbReference type="FunFam" id="3.30.930.10:FF:000129">
    <property type="entry name" value="Histidine--tRNA ligase"/>
    <property type="match status" value="1"/>
</dbReference>
<dbReference type="FunFam" id="3.40.50.800:FF:000027">
    <property type="entry name" value="Histidine--tRNA ligase"/>
    <property type="match status" value="1"/>
</dbReference>
<dbReference type="Gene3D" id="3.40.50.800">
    <property type="entry name" value="Anticodon-binding domain"/>
    <property type="match status" value="1"/>
</dbReference>
<dbReference type="Gene3D" id="3.30.930.10">
    <property type="entry name" value="Bira Bifunctional Protein, Domain 2"/>
    <property type="match status" value="1"/>
</dbReference>
<dbReference type="HAMAP" id="MF_00127">
    <property type="entry name" value="His_tRNA_synth"/>
    <property type="match status" value="1"/>
</dbReference>
<dbReference type="InterPro" id="IPR006195">
    <property type="entry name" value="aa-tRNA-synth_II"/>
</dbReference>
<dbReference type="InterPro" id="IPR045864">
    <property type="entry name" value="aa-tRNA-synth_II/BPL/LPL"/>
</dbReference>
<dbReference type="InterPro" id="IPR004154">
    <property type="entry name" value="Anticodon-bd"/>
</dbReference>
<dbReference type="InterPro" id="IPR036621">
    <property type="entry name" value="Anticodon-bd_dom_sf"/>
</dbReference>
<dbReference type="InterPro" id="IPR015807">
    <property type="entry name" value="His-tRNA-ligase"/>
</dbReference>
<dbReference type="InterPro" id="IPR041715">
    <property type="entry name" value="HisRS-like_core"/>
</dbReference>
<dbReference type="InterPro" id="IPR004516">
    <property type="entry name" value="HisRS/HisZ"/>
</dbReference>
<dbReference type="InterPro" id="IPR033656">
    <property type="entry name" value="HisRS_anticodon"/>
</dbReference>
<dbReference type="NCBIfam" id="TIGR00442">
    <property type="entry name" value="hisS"/>
    <property type="match status" value="1"/>
</dbReference>
<dbReference type="PANTHER" id="PTHR11476:SF7">
    <property type="entry name" value="HISTIDINE--TRNA LIGASE"/>
    <property type="match status" value="1"/>
</dbReference>
<dbReference type="PANTHER" id="PTHR11476">
    <property type="entry name" value="HISTIDYL-TRNA SYNTHETASE"/>
    <property type="match status" value="1"/>
</dbReference>
<dbReference type="Pfam" id="PF03129">
    <property type="entry name" value="HGTP_anticodon"/>
    <property type="match status" value="1"/>
</dbReference>
<dbReference type="Pfam" id="PF13393">
    <property type="entry name" value="tRNA-synt_His"/>
    <property type="match status" value="1"/>
</dbReference>
<dbReference type="PIRSF" id="PIRSF001549">
    <property type="entry name" value="His-tRNA_synth"/>
    <property type="match status" value="1"/>
</dbReference>
<dbReference type="SUPFAM" id="SSF52954">
    <property type="entry name" value="Class II aaRS ABD-related"/>
    <property type="match status" value="1"/>
</dbReference>
<dbReference type="SUPFAM" id="SSF55681">
    <property type="entry name" value="Class II aaRS and biotin synthetases"/>
    <property type="match status" value="1"/>
</dbReference>
<dbReference type="PROSITE" id="PS50862">
    <property type="entry name" value="AA_TRNA_LIGASE_II"/>
    <property type="match status" value="1"/>
</dbReference>
<reference key="1">
    <citation type="journal article" date="2008" name="BMC Genomics">
        <title>Genome sequence and rapid evolution of the rice pathogen Xanthomonas oryzae pv. oryzae PXO99A.</title>
        <authorList>
            <person name="Salzberg S.L."/>
            <person name="Sommer D.D."/>
            <person name="Schatz M.C."/>
            <person name="Phillippy A.M."/>
            <person name="Rabinowicz P.D."/>
            <person name="Tsuge S."/>
            <person name="Furutani A."/>
            <person name="Ochiai H."/>
            <person name="Delcher A.L."/>
            <person name="Kelley D."/>
            <person name="Madupu R."/>
            <person name="Puiu D."/>
            <person name="Radune D."/>
            <person name="Shumway M."/>
            <person name="Trapnell C."/>
            <person name="Aparna G."/>
            <person name="Jha G."/>
            <person name="Pandey A."/>
            <person name="Patil P.B."/>
            <person name="Ishihara H."/>
            <person name="Meyer D.F."/>
            <person name="Szurek B."/>
            <person name="Verdier V."/>
            <person name="Koebnik R."/>
            <person name="Dow J.M."/>
            <person name="Ryan R.P."/>
            <person name="Hirata H."/>
            <person name="Tsuyumu S."/>
            <person name="Won Lee S."/>
            <person name="Seo Y.-S."/>
            <person name="Sriariyanum M."/>
            <person name="Ronald P.C."/>
            <person name="Sonti R.V."/>
            <person name="Van Sluys M.-A."/>
            <person name="Leach J.E."/>
            <person name="White F.F."/>
            <person name="Bogdanove A.J."/>
        </authorList>
    </citation>
    <scope>NUCLEOTIDE SEQUENCE [LARGE SCALE GENOMIC DNA]</scope>
    <source>
        <strain>PXO99A</strain>
    </source>
</reference>
<proteinExistence type="inferred from homology"/>